<comment type="function">
    <text evidence="1">Catalyzes the N-acylation of UDP-3-O-acylglucosamine using 3-hydroxyacyl-ACP as the acyl donor. Is involved in the biosynthesis of lipid A, a phosphorylated glycolipid that anchors the lipopolysaccharide to the outer membrane of the cell.</text>
</comment>
<comment type="catalytic activity">
    <reaction evidence="1">
        <text>a UDP-3-O-[(3R)-3-hydroxyacyl]-alpha-D-glucosamine + a (3R)-hydroxyacyl-[ACP] = a UDP-2-N,3-O-bis[(3R)-3-hydroxyacyl]-alpha-D-glucosamine + holo-[ACP] + H(+)</text>
        <dbReference type="Rhea" id="RHEA:53836"/>
        <dbReference type="Rhea" id="RHEA-COMP:9685"/>
        <dbReference type="Rhea" id="RHEA-COMP:9945"/>
        <dbReference type="ChEBI" id="CHEBI:15378"/>
        <dbReference type="ChEBI" id="CHEBI:64479"/>
        <dbReference type="ChEBI" id="CHEBI:78827"/>
        <dbReference type="ChEBI" id="CHEBI:137740"/>
        <dbReference type="ChEBI" id="CHEBI:137748"/>
        <dbReference type="EC" id="2.3.1.191"/>
    </reaction>
</comment>
<comment type="pathway">
    <text evidence="1">Bacterial outer membrane biogenesis; LPS lipid A biosynthesis.</text>
</comment>
<comment type="subunit">
    <text evidence="1">Homotrimer.</text>
</comment>
<comment type="similarity">
    <text evidence="1">Belongs to the transferase hexapeptide repeat family. LpxD subfamily.</text>
</comment>
<accession>Q7WJ84</accession>
<protein>
    <recommendedName>
        <fullName evidence="1">UDP-3-O-acylglucosamine N-acyltransferase</fullName>
        <ecNumber evidence="1">2.3.1.191</ecNumber>
    </recommendedName>
</protein>
<reference key="1">
    <citation type="journal article" date="2003" name="Nat. Genet.">
        <title>Comparative analysis of the genome sequences of Bordetella pertussis, Bordetella parapertussis and Bordetella bronchiseptica.</title>
        <authorList>
            <person name="Parkhill J."/>
            <person name="Sebaihia M."/>
            <person name="Preston A."/>
            <person name="Murphy L.D."/>
            <person name="Thomson N.R."/>
            <person name="Harris D.E."/>
            <person name="Holden M.T.G."/>
            <person name="Churcher C.M."/>
            <person name="Bentley S.D."/>
            <person name="Mungall K.L."/>
            <person name="Cerdeno-Tarraga A.-M."/>
            <person name="Temple L."/>
            <person name="James K.D."/>
            <person name="Harris B."/>
            <person name="Quail M.A."/>
            <person name="Achtman M."/>
            <person name="Atkin R."/>
            <person name="Baker S."/>
            <person name="Basham D."/>
            <person name="Bason N."/>
            <person name="Cherevach I."/>
            <person name="Chillingworth T."/>
            <person name="Collins M."/>
            <person name="Cronin A."/>
            <person name="Davis P."/>
            <person name="Doggett J."/>
            <person name="Feltwell T."/>
            <person name="Goble A."/>
            <person name="Hamlin N."/>
            <person name="Hauser H."/>
            <person name="Holroyd S."/>
            <person name="Jagels K."/>
            <person name="Leather S."/>
            <person name="Moule S."/>
            <person name="Norberczak H."/>
            <person name="O'Neil S."/>
            <person name="Ormond D."/>
            <person name="Price C."/>
            <person name="Rabbinowitsch E."/>
            <person name="Rutter S."/>
            <person name="Sanders M."/>
            <person name="Saunders D."/>
            <person name="Seeger K."/>
            <person name="Sharp S."/>
            <person name="Simmonds M."/>
            <person name="Skelton J."/>
            <person name="Squares R."/>
            <person name="Squares S."/>
            <person name="Stevens K."/>
            <person name="Unwin L."/>
            <person name="Whitehead S."/>
            <person name="Barrell B.G."/>
            <person name="Maskell D.J."/>
        </authorList>
    </citation>
    <scope>NUCLEOTIDE SEQUENCE [LARGE SCALE GENOMIC DNA]</scope>
    <source>
        <strain>ATCC BAA-588 / NCTC 13252 / RB50</strain>
    </source>
</reference>
<proteinExistence type="inferred from homology"/>
<organism>
    <name type="scientific">Bordetella bronchiseptica (strain ATCC BAA-588 / NCTC 13252 / RB50)</name>
    <name type="common">Alcaligenes bronchisepticus</name>
    <dbReference type="NCBI Taxonomy" id="257310"/>
    <lineage>
        <taxon>Bacteria</taxon>
        <taxon>Pseudomonadati</taxon>
        <taxon>Pseudomonadota</taxon>
        <taxon>Betaproteobacteria</taxon>
        <taxon>Burkholderiales</taxon>
        <taxon>Alcaligenaceae</taxon>
        <taxon>Bordetella</taxon>
    </lineage>
</organism>
<evidence type="ECO:0000255" key="1">
    <source>
        <dbReference type="HAMAP-Rule" id="MF_00523"/>
    </source>
</evidence>
<gene>
    <name evidence="1" type="primary">lpxD</name>
    <name type="ordered locus">BB2615</name>
</gene>
<feature type="chain" id="PRO_0000059648" description="UDP-3-O-acylglucosamine N-acyltransferase">
    <location>
        <begin position="1"/>
        <end position="363"/>
    </location>
</feature>
<feature type="active site" description="Proton acceptor" evidence="1">
    <location>
        <position position="266"/>
    </location>
</feature>
<sequence length="363" mass="37528">MPVLLDPENALALDVLLAGTDAQGLDWHLSAPDAADLPRIRGIGTLSSAGSEEISFLSNPRYQNQLATTRAAAVIVTPDVAQARQEQGASGHVLVVCKHPYLLYARLAQWFERASRPAGPAGVHPSAVVDPSAEIDADARVGAQCVIEAGARIGRGARLGPGCVIGAGSTVGADSLLHPRVTLYAGVHVGERAIIHSGAVLGADGFGFAPDPTLGRGAWGKIPQLGGVRVGNDVEIGANTTIDRGALDDTIVGDGVKLDNQIMVAHNVRIGAHTAIAACVGIAGSTTIGERCTIGGASMLSGHLAIADDVNISGGTAVTSNIAKAGRYTGVYPYAEHSEWQRNAAVIQQLALLRRRLRALERE</sequence>
<dbReference type="EC" id="2.3.1.191" evidence="1"/>
<dbReference type="EMBL" id="BX640444">
    <property type="protein sequence ID" value="CAE33108.1"/>
    <property type="molecule type" value="Genomic_DNA"/>
</dbReference>
<dbReference type="RefSeq" id="WP_003817241.1">
    <property type="nucleotide sequence ID" value="NC_002927.3"/>
</dbReference>
<dbReference type="SMR" id="Q7WJ84"/>
<dbReference type="KEGG" id="bbr:BB2615"/>
<dbReference type="eggNOG" id="COG1044">
    <property type="taxonomic scope" value="Bacteria"/>
</dbReference>
<dbReference type="HOGENOM" id="CLU_049865_0_1_4"/>
<dbReference type="UniPathway" id="UPA00973"/>
<dbReference type="Proteomes" id="UP000001027">
    <property type="component" value="Chromosome"/>
</dbReference>
<dbReference type="GO" id="GO:0016020">
    <property type="term" value="C:membrane"/>
    <property type="evidence" value="ECO:0007669"/>
    <property type="project" value="GOC"/>
</dbReference>
<dbReference type="GO" id="GO:0016410">
    <property type="term" value="F:N-acyltransferase activity"/>
    <property type="evidence" value="ECO:0007669"/>
    <property type="project" value="InterPro"/>
</dbReference>
<dbReference type="GO" id="GO:0009245">
    <property type="term" value="P:lipid A biosynthetic process"/>
    <property type="evidence" value="ECO:0007669"/>
    <property type="project" value="UniProtKB-UniRule"/>
</dbReference>
<dbReference type="CDD" id="cd03352">
    <property type="entry name" value="LbH_LpxD"/>
    <property type="match status" value="1"/>
</dbReference>
<dbReference type="Gene3D" id="2.160.10.10">
    <property type="entry name" value="Hexapeptide repeat proteins"/>
    <property type="match status" value="1"/>
</dbReference>
<dbReference type="Gene3D" id="3.40.1390.10">
    <property type="entry name" value="MurE/MurF, N-terminal domain"/>
    <property type="match status" value="1"/>
</dbReference>
<dbReference type="HAMAP" id="MF_00523">
    <property type="entry name" value="LpxD"/>
    <property type="match status" value="1"/>
</dbReference>
<dbReference type="InterPro" id="IPR001451">
    <property type="entry name" value="Hexapep"/>
</dbReference>
<dbReference type="InterPro" id="IPR018357">
    <property type="entry name" value="Hexapep_transf_CS"/>
</dbReference>
<dbReference type="InterPro" id="IPR007691">
    <property type="entry name" value="LpxD"/>
</dbReference>
<dbReference type="InterPro" id="IPR011004">
    <property type="entry name" value="Trimer_LpxA-like_sf"/>
</dbReference>
<dbReference type="InterPro" id="IPR020573">
    <property type="entry name" value="UDP_GlcNAc_AcTrfase_non-rep"/>
</dbReference>
<dbReference type="NCBIfam" id="TIGR01853">
    <property type="entry name" value="lipid_A_lpxD"/>
    <property type="match status" value="1"/>
</dbReference>
<dbReference type="NCBIfam" id="NF002060">
    <property type="entry name" value="PRK00892.1"/>
    <property type="match status" value="1"/>
</dbReference>
<dbReference type="PANTHER" id="PTHR43378">
    <property type="entry name" value="UDP-3-O-ACYLGLUCOSAMINE N-ACYLTRANSFERASE"/>
    <property type="match status" value="1"/>
</dbReference>
<dbReference type="PANTHER" id="PTHR43378:SF2">
    <property type="entry name" value="UDP-3-O-ACYLGLUCOSAMINE N-ACYLTRANSFERASE 1, MITOCHONDRIAL-RELATED"/>
    <property type="match status" value="1"/>
</dbReference>
<dbReference type="Pfam" id="PF00132">
    <property type="entry name" value="Hexapep"/>
    <property type="match status" value="2"/>
</dbReference>
<dbReference type="Pfam" id="PF14602">
    <property type="entry name" value="Hexapep_2"/>
    <property type="match status" value="1"/>
</dbReference>
<dbReference type="Pfam" id="PF04613">
    <property type="entry name" value="LpxD"/>
    <property type="match status" value="1"/>
</dbReference>
<dbReference type="SUPFAM" id="SSF51161">
    <property type="entry name" value="Trimeric LpxA-like enzymes"/>
    <property type="match status" value="1"/>
</dbReference>
<dbReference type="PROSITE" id="PS00101">
    <property type="entry name" value="HEXAPEP_TRANSFERASES"/>
    <property type="match status" value="2"/>
</dbReference>
<keyword id="KW-0012">Acyltransferase</keyword>
<keyword id="KW-0441">Lipid A biosynthesis</keyword>
<keyword id="KW-0444">Lipid biosynthesis</keyword>
<keyword id="KW-0443">Lipid metabolism</keyword>
<keyword id="KW-0677">Repeat</keyword>
<keyword id="KW-0808">Transferase</keyword>
<name>LPXD_BORBR</name>